<evidence type="ECO:0000255" key="1">
    <source>
        <dbReference type="HAMAP-Rule" id="MF_01366"/>
    </source>
</evidence>
<evidence type="ECO:0000256" key="2">
    <source>
        <dbReference type="SAM" id="MobiDB-lite"/>
    </source>
</evidence>
<evidence type="ECO:0000305" key="3"/>
<comment type="function">
    <text evidence="1">This protein is one of the early assembly proteins of the 50S ribosomal subunit, although it is not seen to bind rRNA by itself. It is important during the early stages of 50S assembly.</text>
</comment>
<comment type="subunit">
    <text evidence="1">Part of the 50S ribosomal subunit.</text>
</comment>
<comment type="similarity">
    <text evidence="1">Belongs to the universal ribosomal protein uL13 family.</text>
</comment>
<proteinExistence type="inferred from homology"/>
<organism>
    <name type="scientific">Verminephrobacter eiseniae (strain EF01-2)</name>
    <dbReference type="NCBI Taxonomy" id="391735"/>
    <lineage>
        <taxon>Bacteria</taxon>
        <taxon>Pseudomonadati</taxon>
        <taxon>Pseudomonadota</taxon>
        <taxon>Betaproteobacteria</taxon>
        <taxon>Burkholderiales</taxon>
        <taxon>Comamonadaceae</taxon>
        <taxon>Verminephrobacter</taxon>
    </lineage>
</organism>
<feature type="chain" id="PRO_1000055488" description="Large ribosomal subunit protein uL13">
    <location>
        <begin position="1"/>
        <end position="147"/>
    </location>
</feature>
<feature type="region of interest" description="Disordered" evidence="2">
    <location>
        <begin position="127"/>
        <end position="147"/>
    </location>
</feature>
<keyword id="KW-1185">Reference proteome</keyword>
<keyword id="KW-0687">Ribonucleoprotein</keyword>
<keyword id="KW-0689">Ribosomal protein</keyword>
<name>RL13_VEREI</name>
<dbReference type="EMBL" id="CP000542">
    <property type="protein sequence ID" value="ABM58381.1"/>
    <property type="molecule type" value="Genomic_DNA"/>
</dbReference>
<dbReference type="RefSeq" id="WP_011810380.1">
    <property type="nucleotide sequence ID" value="NC_008786.1"/>
</dbReference>
<dbReference type="SMR" id="A1WL74"/>
<dbReference type="STRING" id="391735.Veis_2638"/>
<dbReference type="GeneID" id="76461150"/>
<dbReference type="KEGG" id="vei:Veis_2638"/>
<dbReference type="eggNOG" id="COG0102">
    <property type="taxonomic scope" value="Bacteria"/>
</dbReference>
<dbReference type="HOGENOM" id="CLU_082184_2_2_4"/>
<dbReference type="OrthoDB" id="9801330at2"/>
<dbReference type="Proteomes" id="UP000000374">
    <property type="component" value="Chromosome"/>
</dbReference>
<dbReference type="GO" id="GO:0022625">
    <property type="term" value="C:cytosolic large ribosomal subunit"/>
    <property type="evidence" value="ECO:0007669"/>
    <property type="project" value="TreeGrafter"/>
</dbReference>
<dbReference type="GO" id="GO:0003729">
    <property type="term" value="F:mRNA binding"/>
    <property type="evidence" value="ECO:0007669"/>
    <property type="project" value="TreeGrafter"/>
</dbReference>
<dbReference type="GO" id="GO:0003735">
    <property type="term" value="F:structural constituent of ribosome"/>
    <property type="evidence" value="ECO:0007669"/>
    <property type="project" value="InterPro"/>
</dbReference>
<dbReference type="GO" id="GO:0017148">
    <property type="term" value="P:negative regulation of translation"/>
    <property type="evidence" value="ECO:0007669"/>
    <property type="project" value="TreeGrafter"/>
</dbReference>
<dbReference type="GO" id="GO:0006412">
    <property type="term" value="P:translation"/>
    <property type="evidence" value="ECO:0007669"/>
    <property type="project" value="UniProtKB-UniRule"/>
</dbReference>
<dbReference type="CDD" id="cd00392">
    <property type="entry name" value="Ribosomal_L13"/>
    <property type="match status" value="1"/>
</dbReference>
<dbReference type="FunFam" id="3.90.1180.10:FF:000001">
    <property type="entry name" value="50S ribosomal protein L13"/>
    <property type="match status" value="1"/>
</dbReference>
<dbReference type="Gene3D" id="3.90.1180.10">
    <property type="entry name" value="Ribosomal protein L13"/>
    <property type="match status" value="1"/>
</dbReference>
<dbReference type="HAMAP" id="MF_01366">
    <property type="entry name" value="Ribosomal_uL13"/>
    <property type="match status" value="1"/>
</dbReference>
<dbReference type="InterPro" id="IPR005822">
    <property type="entry name" value="Ribosomal_uL13"/>
</dbReference>
<dbReference type="InterPro" id="IPR005823">
    <property type="entry name" value="Ribosomal_uL13_bac-type"/>
</dbReference>
<dbReference type="InterPro" id="IPR036899">
    <property type="entry name" value="Ribosomal_uL13_sf"/>
</dbReference>
<dbReference type="NCBIfam" id="TIGR01066">
    <property type="entry name" value="rplM_bact"/>
    <property type="match status" value="1"/>
</dbReference>
<dbReference type="PANTHER" id="PTHR11545:SF2">
    <property type="entry name" value="LARGE RIBOSOMAL SUBUNIT PROTEIN UL13M"/>
    <property type="match status" value="1"/>
</dbReference>
<dbReference type="PANTHER" id="PTHR11545">
    <property type="entry name" value="RIBOSOMAL PROTEIN L13"/>
    <property type="match status" value="1"/>
</dbReference>
<dbReference type="Pfam" id="PF00572">
    <property type="entry name" value="Ribosomal_L13"/>
    <property type="match status" value="1"/>
</dbReference>
<dbReference type="PIRSF" id="PIRSF002181">
    <property type="entry name" value="Ribosomal_L13"/>
    <property type="match status" value="1"/>
</dbReference>
<dbReference type="SUPFAM" id="SSF52161">
    <property type="entry name" value="Ribosomal protein L13"/>
    <property type="match status" value="1"/>
</dbReference>
<reference key="1">
    <citation type="submission" date="2006-12" db="EMBL/GenBank/DDBJ databases">
        <title>Complete sequence of chromosome 1 of Verminephrobacter eiseniae EF01-2.</title>
        <authorList>
            <person name="Copeland A."/>
            <person name="Lucas S."/>
            <person name="Lapidus A."/>
            <person name="Barry K."/>
            <person name="Detter J.C."/>
            <person name="Glavina del Rio T."/>
            <person name="Dalin E."/>
            <person name="Tice H."/>
            <person name="Pitluck S."/>
            <person name="Chertkov O."/>
            <person name="Brettin T."/>
            <person name="Bruce D."/>
            <person name="Han C."/>
            <person name="Tapia R."/>
            <person name="Gilna P."/>
            <person name="Schmutz J."/>
            <person name="Larimer F."/>
            <person name="Land M."/>
            <person name="Hauser L."/>
            <person name="Kyrpides N."/>
            <person name="Kim E."/>
            <person name="Stahl D."/>
            <person name="Richardson P."/>
        </authorList>
    </citation>
    <scope>NUCLEOTIDE SEQUENCE [LARGE SCALE GENOMIC DNA]</scope>
    <source>
        <strain>EF01-2</strain>
    </source>
</reference>
<gene>
    <name evidence="1" type="primary">rplM</name>
    <name type="ordered locus">Veis_2638</name>
</gene>
<protein>
    <recommendedName>
        <fullName evidence="1">Large ribosomal subunit protein uL13</fullName>
    </recommendedName>
    <alternativeName>
        <fullName evidence="3">50S ribosomal protein L13</fullName>
    </alternativeName>
</protein>
<sequence>MSTISAKPAEVVHEWFVIDATDKVLGRVASEVALRLRGKHKAIYTPHVDTGDFIVIINAARIKVTGTKSLDKVYYRHSGYPGGITAVNFRDMQARHPGRALEKAVKGMLPKGPLGYAMIKKLKVYGGPEHPHSAQQPKVLEIQGAAR</sequence>
<accession>A1WL74</accession>